<sequence>MRVIRPVEHADIAALMQLAGKTGGGLTSLPANEATLAARIERALKTWSGELPKGEQGYVFVLEDSETGEVGGICAIEVAVGLNDPWYNYRVGTLVHASKELNVYNALPTLFLSNDHTGSSELCTLFLDPEWRKEGNGYLLSKSRFMFMAAFRDKFNEKVVAEMRGVIDEHGYSPFWQSLGKRFFSMDFSRADFLCGTGQKAFIAELMPKHPIYTHFLSEEAQAVIGEVHPQTAPARAVLEKEGFRYRHYIDIFDGGPTLECDIDRVRAIRKSRLVEVAEGQPAPGDYPACLVANENYHHFRAALVRADPQTSRLVLTAAQLDALKCRAGDHVRLVRLCAEEKTV</sequence>
<organism>
    <name type="scientific">Salmonella paratyphi A (strain ATCC 9150 / SARB42)</name>
    <dbReference type="NCBI Taxonomy" id="295319"/>
    <lineage>
        <taxon>Bacteria</taxon>
        <taxon>Pseudomonadati</taxon>
        <taxon>Pseudomonadota</taxon>
        <taxon>Gammaproteobacteria</taxon>
        <taxon>Enterobacterales</taxon>
        <taxon>Enterobacteriaceae</taxon>
        <taxon>Salmonella</taxon>
    </lineage>
</organism>
<gene>
    <name evidence="1" type="primary">astA</name>
    <name type="ordered locus">SPA1540</name>
</gene>
<accession>Q5PHB9</accession>
<dbReference type="EC" id="2.3.1.109" evidence="1"/>
<dbReference type="EMBL" id="CP000026">
    <property type="protein sequence ID" value="AAV77473.1"/>
    <property type="molecule type" value="Genomic_DNA"/>
</dbReference>
<dbReference type="RefSeq" id="WP_001263889.1">
    <property type="nucleotide sequence ID" value="NC_006511.1"/>
</dbReference>
<dbReference type="SMR" id="Q5PHB9"/>
<dbReference type="KEGG" id="spt:SPA1540"/>
<dbReference type="HOGENOM" id="CLU_057655_0_0_6"/>
<dbReference type="UniPathway" id="UPA00185">
    <property type="reaction ID" value="UER00279"/>
</dbReference>
<dbReference type="Proteomes" id="UP000008185">
    <property type="component" value="Chromosome"/>
</dbReference>
<dbReference type="GO" id="GO:0008791">
    <property type="term" value="F:arginine N-succinyltransferase activity"/>
    <property type="evidence" value="ECO:0007669"/>
    <property type="project" value="UniProtKB-UniRule"/>
</dbReference>
<dbReference type="GO" id="GO:0019544">
    <property type="term" value="P:arginine catabolic process to glutamate"/>
    <property type="evidence" value="ECO:0007669"/>
    <property type="project" value="UniProtKB-UniRule"/>
</dbReference>
<dbReference type="GO" id="GO:0019545">
    <property type="term" value="P:arginine catabolic process to succinate"/>
    <property type="evidence" value="ECO:0007669"/>
    <property type="project" value="UniProtKB-UniRule"/>
</dbReference>
<dbReference type="Gene3D" id="2.40.40.20">
    <property type="match status" value="1"/>
</dbReference>
<dbReference type="Gene3D" id="3.40.630.30">
    <property type="match status" value="1"/>
</dbReference>
<dbReference type="HAMAP" id="MF_01171">
    <property type="entry name" value="AstA"/>
    <property type="match status" value="1"/>
</dbReference>
<dbReference type="InterPro" id="IPR016181">
    <property type="entry name" value="Acyl_CoA_acyltransferase"/>
</dbReference>
<dbReference type="InterPro" id="IPR007041">
    <property type="entry name" value="Arg_succinylTrfase_AstA/AruG"/>
</dbReference>
<dbReference type="InterPro" id="IPR017650">
    <property type="entry name" value="Arginine_N-succinylTrfase"/>
</dbReference>
<dbReference type="NCBIfam" id="TIGR03243">
    <property type="entry name" value="arg_catab_AOST"/>
    <property type="match status" value="1"/>
</dbReference>
<dbReference type="NCBIfam" id="TIGR03244">
    <property type="entry name" value="arg_catab_AstA"/>
    <property type="match status" value="1"/>
</dbReference>
<dbReference type="NCBIfam" id="NF007770">
    <property type="entry name" value="PRK10456.1"/>
    <property type="match status" value="1"/>
</dbReference>
<dbReference type="PANTHER" id="PTHR30420:SF1">
    <property type="entry name" value="ARGININE N-SUCCINYLTRANSFERASE"/>
    <property type="match status" value="1"/>
</dbReference>
<dbReference type="PANTHER" id="PTHR30420">
    <property type="entry name" value="N-SUCCINYLARGININE DIHYDROLASE"/>
    <property type="match status" value="1"/>
</dbReference>
<dbReference type="Pfam" id="PF04958">
    <property type="entry name" value="AstA"/>
    <property type="match status" value="1"/>
</dbReference>
<dbReference type="SUPFAM" id="SSF55729">
    <property type="entry name" value="Acyl-CoA N-acyltransferases (Nat)"/>
    <property type="match status" value="1"/>
</dbReference>
<feature type="chain" id="PRO_0000262327" description="Arginine N-succinyltransferase">
    <location>
        <begin position="1"/>
        <end position="344"/>
    </location>
</feature>
<feature type="active site" description="Proton donor" evidence="1">
    <location>
        <position position="229"/>
    </location>
</feature>
<feature type="binding site" evidence="1">
    <location>
        <position position="125"/>
    </location>
    <ligand>
        <name>succinyl-CoA</name>
        <dbReference type="ChEBI" id="CHEBI:57292"/>
    </ligand>
</feature>
<reference key="1">
    <citation type="journal article" date="2004" name="Nat. Genet.">
        <title>Comparison of genome degradation in Paratyphi A and Typhi, human-restricted serovars of Salmonella enterica that cause typhoid.</title>
        <authorList>
            <person name="McClelland M."/>
            <person name="Sanderson K.E."/>
            <person name="Clifton S.W."/>
            <person name="Latreille P."/>
            <person name="Porwollik S."/>
            <person name="Sabo A."/>
            <person name="Meyer R."/>
            <person name="Bieri T."/>
            <person name="Ozersky P."/>
            <person name="McLellan M."/>
            <person name="Harkins C.R."/>
            <person name="Wang C."/>
            <person name="Nguyen C."/>
            <person name="Berghoff A."/>
            <person name="Elliott G."/>
            <person name="Kohlberg S."/>
            <person name="Strong C."/>
            <person name="Du F."/>
            <person name="Carter J."/>
            <person name="Kremizki C."/>
            <person name="Layman D."/>
            <person name="Leonard S."/>
            <person name="Sun H."/>
            <person name="Fulton L."/>
            <person name="Nash W."/>
            <person name="Miner T."/>
            <person name="Minx P."/>
            <person name="Delehaunty K."/>
            <person name="Fronick C."/>
            <person name="Magrini V."/>
            <person name="Nhan M."/>
            <person name="Warren W."/>
            <person name="Florea L."/>
            <person name="Spieth J."/>
            <person name="Wilson R.K."/>
        </authorList>
    </citation>
    <scope>NUCLEOTIDE SEQUENCE [LARGE SCALE GENOMIC DNA]</scope>
    <source>
        <strain>ATCC 9150 / SARB42</strain>
    </source>
</reference>
<comment type="function">
    <text evidence="1">Catalyzes the transfer of succinyl-CoA to arginine to produce N(2)-succinylarginine.</text>
</comment>
<comment type="catalytic activity">
    <reaction evidence="1">
        <text>succinyl-CoA + L-arginine = N(2)-succinyl-L-arginine + CoA + H(+)</text>
        <dbReference type="Rhea" id="RHEA:15185"/>
        <dbReference type="ChEBI" id="CHEBI:15378"/>
        <dbReference type="ChEBI" id="CHEBI:32682"/>
        <dbReference type="ChEBI" id="CHEBI:57287"/>
        <dbReference type="ChEBI" id="CHEBI:57292"/>
        <dbReference type="ChEBI" id="CHEBI:58241"/>
        <dbReference type="EC" id="2.3.1.109"/>
    </reaction>
</comment>
<comment type="pathway">
    <text evidence="1">Amino-acid degradation; L-arginine degradation via AST pathway; L-glutamate and succinate from L-arginine: step 1/5.</text>
</comment>
<comment type="similarity">
    <text evidence="1">Belongs to the arginine N-succinyltransferase family.</text>
</comment>
<name>ASTA_SALPA</name>
<evidence type="ECO:0000255" key="1">
    <source>
        <dbReference type="HAMAP-Rule" id="MF_01171"/>
    </source>
</evidence>
<protein>
    <recommendedName>
        <fullName evidence="1">Arginine N-succinyltransferase</fullName>
        <shortName evidence="1">AST</shortName>
        <ecNumber evidence="1">2.3.1.109</ecNumber>
    </recommendedName>
    <alternativeName>
        <fullName evidence="1">AOST</fullName>
    </alternativeName>
</protein>
<proteinExistence type="inferred from homology"/>
<keyword id="KW-0012">Acyltransferase</keyword>
<keyword id="KW-0056">Arginine metabolism</keyword>
<keyword id="KW-0808">Transferase</keyword>